<keyword id="KW-0687">Ribonucleoprotein</keyword>
<keyword id="KW-0689">Ribosomal protein</keyword>
<keyword id="KW-0694">RNA-binding</keyword>
<keyword id="KW-0699">rRNA-binding</keyword>
<keyword id="KW-0820">tRNA-binding</keyword>
<reference key="1">
    <citation type="journal article" date="2008" name="PLoS ONE">
        <title>Genome sequence of a lancefield group C Streptococcus zooepidemicus strain causing epidemic nephritis: new information about an old disease.</title>
        <authorList>
            <person name="Beres S.B."/>
            <person name="Sesso R."/>
            <person name="Pinto S.W.L."/>
            <person name="Hoe N.P."/>
            <person name="Porcella S.F."/>
            <person name="Deleo F.R."/>
            <person name="Musser J.M."/>
        </authorList>
    </citation>
    <scope>NUCLEOTIDE SEQUENCE [LARGE SCALE GENOMIC DNA]</scope>
    <source>
        <strain>MGCS10565</strain>
    </source>
</reference>
<gene>
    <name evidence="1" type="primary">rpsG</name>
    <name type="ordered locus">Sez_0267</name>
</gene>
<sequence>MSRKNRAPKREVLPDPLYNSKLVTRLINRIMLDGKRGTASSIVYDAFSEIKEATGNDALEVFETAMDNIMPVLEVRARRVGGSNYQVPVEVRPERRTTLGLRWLVTASRARGEHTMKDRLAKEIMDAANNTGASVKKREDTHKMAEANRAFAHFRW</sequence>
<accession>B4U0V8</accession>
<evidence type="ECO:0000255" key="1">
    <source>
        <dbReference type="HAMAP-Rule" id="MF_00480"/>
    </source>
</evidence>
<evidence type="ECO:0000305" key="2"/>
<comment type="function">
    <text evidence="1">One of the primary rRNA binding proteins, it binds directly to 16S rRNA where it nucleates assembly of the head domain of the 30S subunit. Is located at the subunit interface close to the decoding center, probably blocks exit of the E-site tRNA.</text>
</comment>
<comment type="subunit">
    <text evidence="1">Part of the 30S ribosomal subunit. Contacts proteins S9 and S11.</text>
</comment>
<comment type="similarity">
    <text evidence="1">Belongs to the universal ribosomal protein uS7 family.</text>
</comment>
<proteinExistence type="inferred from homology"/>
<organism>
    <name type="scientific">Streptococcus equi subsp. zooepidemicus (strain MGCS10565)</name>
    <dbReference type="NCBI Taxonomy" id="552526"/>
    <lineage>
        <taxon>Bacteria</taxon>
        <taxon>Bacillati</taxon>
        <taxon>Bacillota</taxon>
        <taxon>Bacilli</taxon>
        <taxon>Lactobacillales</taxon>
        <taxon>Streptococcaceae</taxon>
        <taxon>Streptococcus</taxon>
    </lineage>
</organism>
<protein>
    <recommendedName>
        <fullName evidence="1">Small ribosomal subunit protein uS7</fullName>
    </recommendedName>
    <alternativeName>
        <fullName evidence="2">30S ribosomal protein S7</fullName>
    </alternativeName>
</protein>
<name>RS7_STREM</name>
<feature type="chain" id="PRO_1000126004" description="Small ribosomal subunit protein uS7">
    <location>
        <begin position="1"/>
        <end position="156"/>
    </location>
</feature>
<dbReference type="EMBL" id="CP001129">
    <property type="protein sequence ID" value="ACG61645.1"/>
    <property type="molecule type" value="Genomic_DNA"/>
</dbReference>
<dbReference type="RefSeq" id="WP_012514926.1">
    <property type="nucleotide sequence ID" value="NC_011134.1"/>
</dbReference>
<dbReference type="SMR" id="B4U0V8"/>
<dbReference type="GeneID" id="83704172"/>
<dbReference type="KEGG" id="sez:Sez_0267"/>
<dbReference type="HOGENOM" id="CLU_072226_1_1_9"/>
<dbReference type="Proteomes" id="UP000001873">
    <property type="component" value="Chromosome"/>
</dbReference>
<dbReference type="GO" id="GO:0015935">
    <property type="term" value="C:small ribosomal subunit"/>
    <property type="evidence" value="ECO:0007669"/>
    <property type="project" value="InterPro"/>
</dbReference>
<dbReference type="GO" id="GO:0019843">
    <property type="term" value="F:rRNA binding"/>
    <property type="evidence" value="ECO:0007669"/>
    <property type="project" value="UniProtKB-UniRule"/>
</dbReference>
<dbReference type="GO" id="GO:0003735">
    <property type="term" value="F:structural constituent of ribosome"/>
    <property type="evidence" value="ECO:0007669"/>
    <property type="project" value="InterPro"/>
</dbReference>
<dbReference type="GO" id="GO:0000049">
    <property type="term" value="F:tRNA binding"/>
    <property type="evidence" value="ECO:0007669"/>
    <property type="project" value="UniProtKB-UniRule"/>
</dbReference>
<dbReference type="GO" id="GO:0006412">
    <property type="term" value="P:translation"/>
    <property type="evidence" value="ECO:0007669"/>
    <property type="project" value="UniProtKB-UniRule"/>
</dbReference>
<dbReference type="CDD" id="cd14869">
    <property type="entry name" value="uS7_Bacteria"/>
    <property type="match status" value="1"/>
</dbReference>
<dbReference type="FunFam" id="1.10.455.10:FF:000001">
    <property type="entry name" value="30S ribosomal protein S7"/>
    <property type="match status" value="1"/>
</dbReference>
<dbReference type="Gene3D" id="1.10.455.10">
    <property type="entry name" value="Ribosomal protein S7 domain"/>
    <property type="match status" value="1"/>
</dbReference>
<dbReference type="HAMAP" id="MF_00480_B">
    <property type="entry name" value="Ribosomal_uS7_B"/>
    <property type="match status" value="1"/>
</dbReference>
<dbReference type="InterPro" id="IPR000235">
    <property type="entry name" value="Ribosomal_uS7"/>
</dbReference>
<dbReference type="InterPro" id="IPR005717">
    <property type="entry name" value="Ribosomal_uS7_bac/org-type"/>
</dbReference>
<dbReference type="InterPro" id="IPR020606">
    <property type="entry name" value="Ribosomal_uS7_CS"/>
</dbReference>
<dbReference type="InterPro" id="IPR023798">
    <property type="entry name" value="Ribosomal_uS7_dom"/>
</dbReference>
<dbReference type="InterPro" id="IPR036823">
    <property type="entry name" value="Ribosomal_uS7_dom_sf"/>
</dbReference>
<dbReference type="NCBIfam" id="TIGR01029">
    <property type="entry name" value="rpsG_bact"/>
    <property type="match status" value="1"/>
</dbReference>
<dbReference type="PANTHER" id="PTHR11205">
    <property type="entry name" value="RIBOSOMAL PROTEIN S7"/>
    <property type="match status" value="1"/>
</dbReference>
<dbReference type="Pfam" id="PF00177">
    <property type="entry name" value="Ribosomal_S7"/>
    <property type="match status" value="1"/>
</dbReference>
<dbReference type="PIRSF" id="PIRSF002122">
    <property type="entry name" value="RPS7p_RPS7a_RPS5e_RPS7o"/>
    <property type="match status" value="1"/>
</dbReference>
<dbReference type="SUPFAM" id="SSF47973">
    <property type="entry name" value="Ribosomal protein S7"/>
    <property type="match status" value="1"/>
</dbReference>
<dbReference type="PROSITE" id="PS00052">
    <property type="entry name" value="RIBOSOMAL_S7"/>
    <property type="match status" value="1"/>
</dbReference>